<dbReference type="EC" id="3.1.15.-" evidence="1"/>
<dbReference type="EMBL" id="CP000439">
    <property type="protein sequence ID" value="ABK88979.1"/>
    <property type="molecule type" value="Genomic_DNA"/>
</dbReference>
<dbReference type="RefSeq" id="WP_003040911.1">
    <property type="nucleotide sequence ID" value="NZ_CP009633.1"/>
</dbReference>
<dbReference type="SMR" id="A0Q414"/>
<dbReference type="KEGG" id="ftn:FTN_0068"/>
<dbReference type="KEGG" id="ftx:AW25_132"/>
<dbReference type="BioCyc" id="FTUL401614:G1G75-71-MONOMER"/>
<dbReference type="Proteomes" id="UP000000762">
    <property type="component" value="Chromosome"/>
</dbReference>
<dbReference type="GO" id="GO:0005737">
    <property type="term" value="C:cytoplasm"/>
    <property type="evidence" value="ECO:0007669"/>
    <property type="project" value="UniProtKB-SubCell"/>
</dbReference>
<dbReference type="GO" id="GO:0000175">
    <property type="term" value="F:3'-5'-RNA exonuclease activity"/>
    <property type="evidence" value="ECO:0007669"/>
    <property type="project" value="InterPro"/>
</dbReference>
<dbReference type="GO" id="GO:0003676">
    <property type="term" value="F:nucleic acid binding"/>
    <property type="evidence" value="ECO:0007669"/>
    <property type="project" value="InterPro"/>
</dbReference>
<dbReference type="GO" id="GO:0006259">
    <property type="term" value="P:DNA metabolic process"/>
    <property type="evidence" value="ECO:0007669"/>
    <property type="project" value="UniProtKB-ARBA"/>
</dbReference>
<dbReference type="CDD" id="cd06135">
    <property type="entry name" value="Orn"/>
    <property type="match status" value="1"/>
</dbReference>
<dbReference type="FunFam" id="3.30.420.10:FF:000003">
    <property type="entry name" value="Oligoribonuclease"/>
    <property type="match status" value="1"/>
</dbReference>
<dbReference type="Gene3D" id="3.30.420.10">
    <property type="entry name" value="Ribonuclease H-like superfamily/Ribonuclease H"/>
    <property type="match status" value="1"/>
</dbReference>
<dbReference type="HAMAP" id="MF_00045">
    <property type="entry name" value="Oligoribonuclease"/>
    <property type="match status" value="1"/>
</dbReference>
<dbReference type="InterPro" id="IPR013520">
    <property type="entry name" value="Exonuclease_RNaseT/DNA_pol3"/>
</dbReference>
<dbReference type="InterPro" id="IPR022894">
    <property type="entry name" value="Oligoribonuclease"/>
</dbReference>
<dbReference type="InterPro" id="IPR012337">
    <property type="entry name" value="RNaseH-like_sf"/>
</dbReference>
<dbReference type="InterPro" id="IPR036397">
    <property type="entry name" value="RNaseH_sf"/>
</dbReference>
<dbReference type="NCBIfam" id="NF003765">
    <property type="entry name" value="PRK05359.1"/>
    <property type="match status" value="1"/>
</dbReference>
<dbReference type="PANTHER" id="PTHR11046">
    <property type="entry name" value="OLIGORIBONUCLEASE, MITOCHONDRIAL"/>
    <property type="match status" value="1"/>
</dbReference>
<dbReference type="PANTHER" id="PTHR11046:SF0">
    <property type="entry name" value="OLIGORIBONUCLEASE, MITOCHONDRIAL"/>
    <property type="match status" value="1"/>
</dbReference>
<dbReference type="Pfam" id="PF00929">
    <property type="entry name" value="RNase_T"/>
    <property type="match status" value="1"/>
</dbReference>
<dbReference type="SMART" id="SM00479">
    <property type="entry name" value="EXOIII"/>
    <property type="match status" value="1"/>
</dbReference>
<dbReference type="SUPFAM" id="SSF53098">
    <property type="entry name" value="Ribonuclease H-like"/>
    <property type="match status" value="1"/>
</dbReference>
<gene>
    <name evidence="1" type="primary">orn</name>
    <name type="ordered locus">FTN_0068</name>
</gene>
<sequence length="178" mass="20660">MQSADNLIWIDLEMTGLDVDSCKIIEIAAIITDKDLNIIAEAEPIAIHQSDEILNSMNEWCIKVHCETGLTQRVKDSKISTEAAEQQILEFIRKFVPYQSSPLCGNSIWQDRRFLAKYMPKIDEYCHYRMLDVTTLKLLNQYWGDGKGFEKKNTHKALDDIRESIAELKFYRQKLLSI</sequence>
<organism>
    <name type="scientific">Francisella tularensis subsp. novicida (strain U112)</name>
    <dbReference type="NCBI Taxonomy" id="401614"/>
    <lineage>
        <taxon>Bacteria</taxon>
        <taxon>Pseudomonadati</taxon>
        <taxon>Pseudomonadota</taxon>
        <taxon>Gammaproteobacteria</taxon>
        <taxon>Thiotrichales</taxon>
        <taxon>Francisellaceae</taxon>
        <taxon>Francisella</taxon>
    </lineage>
</organism>
<proteinExistence type="inferred from homology"/>
<evidence type="ECO:0000255" key="1">
    <source>
        <dbReference type="HAMAP-Rule" id="MF_00045"/>
    </source>
</evidence>
<reference key="1">
    <citation type="journal article" date="2007" name="Genome Biol.">
        <title>Comparison of Francisella tularensis genomes reveals evolutionary events associated with the emergence of human pathogenic strains.</title>
        <authorList>
            <person name="Rohmer L."/>
            <person name="Fong C."/>
            <person name="Abmayr S."/>
            <person name="Wasnick M."/>
            <person name="Larson Freeman T.J."/>
            <person name="Radey M."/>
            <person name="Guina T."/>
            <person name="Svensson K."/>
            <person name="Hayden H.S."/>
            <person name="Jacobs M."/>
            <person name="Gallagher L.A."/>
            <person name="Manoil C."/>
            <person name="Ernst R.K."/>
            <person name="Drees B."/>
            <person name="Buckley D."/>
            <person name="Haugen E."/>
            <person name="Bovee D."/>
            <person name="Zhou Y."/>
            <person name="Chang J."/>
            <person name="Levy R."/>
            <person name="Lim R."/>
            <person name="Gillett W."/>
            <person name="Guenthener D."/>
            <person name="Kang A."/>
            <person name="Shaffer S.A."/>
            <person name="Taylor G."/>
            <person name="Chen J."/>
            <person name="Gallis B."/>
            <person name="D'Argenio D.A."/>
            <person name="Forsman M."/>
            <person name="Olson M.V."/>
            <person name="Goodlett D.R."/>
            <person name="Kaul R."/>
            <person name="Miller S.I."/>
            <person name="Brittnacher M.J."/>
        </authorList>
    </citation>
    <scope>NUCLEOTIDE SEQUENCE [LARGE SCALE GENOMIC DNA]</scope>
    <source>
        <strain>U112</strain>
    </source>
</reference>
<protein>
    <recommendedName>
        <fullName evidence="1">Oligoribonuclease</fullName>
        <ecNumber evidence="1">3.1.15.-</ecNumber>
    </recommendedName>
</protein>
<accession>A0Q414</accession>
<keyword id="KW-0963">Cytoplasm</keyword>
<keyword id="KW-0269">Exonuclease</keyword>
<keyword id="KW-0378">Hydrolase</keyword>
<keyword id="KW-0540">Nuclease</keyword>
<comment type="function">
    <text evidence="1">3'-to-5' exoribonuclease specific for small oligoribonucleotides.</text>
</comment>
<comment type="subcellular location">
    <subcellularLocation>
        <location evidence="1">Cytoplasm</location>
    </subcellularLocation>
</comment>
<comment type="similarity">
    <text evidence="1">Belongs to the oligoribonuclease family.</text>
</comment>
<name>ORN_FRATN</name>
<feature type="chain" id="PRO_1000004250" description="Oligoribonuclease">
    <location>
        <begin position="1"/>
        <end position="178"/>
    </location>
</feature>
<feature type="domain" description="Exonuclease" evidence="1">
    <location>
        <begin position="7"/>
        <end position="168"/>
    </location>
</feature>
<feature type="active site" evidence="1">
    <location>
        <position position="128"/>
    </location>
</feature>